<name>JUPIT_DROWI</name>
<organism>
    <name type="scientific">Drosophila willistoni</name>
    <name type="common">Fruit fly</name>
    <dbReference type="NCBI Taxonomy" id="7260"/>
    <lineage>
        <taxon>Eukaryota</taxon>
        <taxon>Metazoa</taxon>
        <taxon>Ecdysozoa</taxon>
        <taxon>Arthropoda</taxon>
        <taxon>Hexapoda</taxon>
        <taxon>Insecta</taxon>
        <taxon>Pterygota</taxon>
        <taxon>Neoptera</taxon>
        <taxon>Endopterygota</taxon>
        <taxon>Diptera</taxon>
        <taxon>Brachycera</taxon>
        <taxon>Muscomorpha</taxon>
        <taxon>Ephydroidea</taxon>
        <taxon>Drosophilidae</taxon>
        <taxon>Drosophila</taxon>
        <taxon>Sophophora</taxon>
    </lineage>
</organism>
<feature type="chain" id="PRO_0000355134" description="Microtubule-associated protein Jupiter">
    <location>
        <begin position="1"/>
        <end position="368"/>
    </location>
</feature>
<feature type="region of interest" description="Disordered" evidence="2">
    <location>
        <begin position="81"/>
        <end position="106"/>
    </location>
</feature>
<feature type="region of interest" description="Disordered" evidence="2">
    <location>
        <begin position="129"/>
        <end position="164"/>
    </location>
</feature>
<feature type="region of interest" description="Disordered" evidence="2">
    <location>
        <begin position="196"/>
        <end position="256"/>
    </location>
</feature>
<feature type="region of interest" description="Disordered" evidence="2">
    <location>
        <begin position="316"/>
        <end position="368"/>
    </location>
</feature>
<feature type="compositionally biased region" description="Basic and acidic residues" evidence="2">
    <location>
        <begin position="81"/>
        <end position="93"/>
    </location>
</feature>
<feature type="compositionally biased region" description="Low complexity" evidence="2">
    <location>
        <begin position="129"/>
        <end position="157"/>
    </location>
</feature>
<feature type="compositionally biased region" description="Low complexity" evidence="2">
    <location>
        <begin position="238"/>
        <end position="248"/>
    </location>
</feature>
<feature type="compositionally biased region" description="Polar residues" evidence="2">
    <location>
        <begin position="337"/>
        <end position="354"/>
    </location>
</feature>
<feature type="modified residue" description="Phosphoserine" evidence="1">
    <location>
        <position position="30"/>
    </location>
</feature>
<feature type="modified residue" description="Phosphothreonine" evidence="1">
    <location>
        <position position="41"/>
    </location>
</feature>
<feature type="modified residue" description="Phosphothreonine" evidence="1">
    <location>
        <position position="102"/>
    </location>
</feature>
<feature type="modified residue" description="Phosphoserine" evidence="1">
    <location>
        <position position="111"/>
    </location>
</feature>
<feature type="modified residue" description="Phosphoserine" evidence="1">
    <location>
        <position position="146"/>
    </location>
</feature>
<feature type="modified residue" description="Phosphoserine" evidence="1">
    <location>
        <position position="157"/>
    </location>
</feature>
<dbReference type="EMBL" id="CH964232">
    <property type="protein sequence ID" value="EDW81417.1"/>
    <property type="molecule type" value="Genomic_DNA"/>
</dbReference>
<dbReference type="RefSeq" id="XP_002070431.2">
    <property type="nucleotide sequence ID" value="XM_002070395.2"/>
</dbReference>
<dbReference type="STRING" id="7260.B4N8G6"/>
<dbReference type="EnsemblMetazoa" id="FBtr0419291">
    <property type="protein sequence ID" value="FBpp0377428"/>
    <property type="gene ID" value="FBgn0213046"/>
</dbReference>
<dbReference type="EnsemblMetazoa" id="FBtr0421760">
    <property type="protein sequence ID" value="FBpp0379852"/>
    <property type="gene ID" value="FBgn0213046"/>
</dbReference>
<dbReference type="eggNOG" id="ENOG502S7TC">
    <property type="taxonomic scope" value="Eukaryota"/>
</dbReference>
<dbReference type="HOGENOM" id="CLU_076719_0_0_1"/>
<dbReference type="OMA" id="GANDFHQ"/>
<dbReference type="PhylomeDB" id="B4N8G6"/>
<dbReference type="ChiTaRS" id="Jupiter">
    <property type="organism name" value="fly"/>
</dbReference>
<dbReference type="Proteomes" id="UP000007798">
    <property type="component" value="Unassembled WGS sequence"/>
</dbReference>
<dbReference type="GO" id="GO:0005829">
    <property type="term" value="C:cytosol"/>
    <property type="evidence" value="ECO:0000250"/>
    <property type="project" value="UniProtKB"/>
</dbReference>
<dbReference type="GO" id="GO:0005874">
    <property type="term" value="C:microtubule"/>
    <property type="evidence" value="ECO:0007669"/>
    <property type="project" value="UniProtKB-KW"/>
</dbReference>
<dbReference type="GO" id="GO:0005875">
    <property type="term" value="C:microtubule associated complex"/>
    <property type="evidence" value="ECO:0000250"/>
    <property type="project" value="UniProtKB"/>
</dbReference>
<dbReference type="GO" id="GO:0005634">
    <property type="term" value="C:nucleus"/>
    <property type="evidence" value="ECO:0000250"/>
    <property type="project" value="UniProtKB"/>
</dbReference>
<dbReference type="GO" id="GO:0005819">
    <property type="term" value="C:spindle"/>
    <property type="evidence" value="ECO:0007669"/>
    <property type="project" value="UniProtKB-SubCell"/>
</dbReference>
<dbReference type="GO" id="GO:0008017">
    <property type="term" value="F:microtubule binding"/>
    <property type="evidence" value="ECO:0000250"/>
    <property type="project" value="UniProtKB"/>
</dbReference>
<dbReference type="GO" id="GO:0005200">
    <property type="term" value="F:structural constituent of cytoskeleton"/>
    <property type="evidence" value="ECO:0000250"/>
    <property type="project" value="UniProtKB"/>
</dbReference>
<dbReference type="GO" id="GO:0031116">
    <property type="term" value="P:positive regulation of microtubule polymerization"/>
    <property type="evidence" value="ECO:0000250"/>
    <property type="project" value="UniProtKB"/>
</dbReference>
<dbReference type="InterPro" id="IPR033335">
    <property type="entry name" value="JUPITER"/>
</dbReference>
<dbReference type="PANTHER" id="PTHR34930">
    <property type="entry name" value="GEO05313P1"/>
    <property type="match status" value="1"/>
</dbReference>
<dbReference type="PANTHER" id="PTHR34930:SF2">
    <property type="entry name" value="MICROTUBULE-ASSOCIATED PROTEIN JUPITER"/>
    <property type="match status" value="1"/>
</dbReference>
<dbReference type="Pfam" id="PF17054">
    <property type="entry name" value="JUPITER"/>
    <property type="match status" value="1"/>
</dbReference>
<keyword id="KW-0963">Cytoplasm</keyword>
<keyword id="KW-0206">Cytoskeleton</keyword>
<keyword id="KW-0493">Microtubule</keyword>
<keyword id="KW-0539">Nucleus</keyword>
<keyword id="KW-0597">Phosphoprotein</keyword>
<keyword id="KW-1185">Reference proteome</keyword>
<accession>B4N8G6</accession>
<evidence type="ECO:0000250" key="1">
    <source>
        <dbReference type="UniProtKB" id="Q9I7K0"/>
    </source>
</evidence>
<evidence type="ECO:0000256" key="2">
    <source>
        <dbReference type="SAM" id="MobiDB-lite"/>
    </source>
</evidence>
<evidence type="ECO:0000305" key="3"/>
<evidence type="ECO:0000312" key="4">
    <source>
        <dbReference type="EMBL" id="EDW81417.1"/>
    </source>
</evidence>
<sequence length="368" mass="38838">MAAYAAFKHVELYNVGKAKKRVLRPPGGGSSDIFGADMPATPRTVKNRMISNIFSADKDGAIKNNVRQGAHRFYFIGETPRRGQKSVDSHSRLFGEPSRPITPGKNHMKSSIPFGQNSEAAAAQKLLTNGNTNSTTNGHYNGKSGSVSSASSSVSSSTENLKINSGSRSVFRNMSTAAGADKMNKMDDPDCASLISQGNSGFADPVAQGGDTASIDMPCKSNDVGSLHGDNQSHTESGRYGYSSQSRRTAGTSPLNPYSLDKINSASAAFKEPLGPCSDYIKDPQHVPCIKIHAKDEHRNPITGLGLNGDGVGGLKPKKMKIREGNPVTGEGYKSGGSDSAQTPTMNGANQVINKNRVPPGGYSSGLW</sequence>
<reference evidence="4" key="1">
    <citation type="journal article" date="2007" name="Nature">
        <title>Evolution of genes and genomes on the Drosophila phylogeny.</title>
        <authorList>
            <consortium name="Drosophila 12 genomes consortium"/>
        </authorList>
    </citation>
    <scope>NUCLEOTIDE SEQUENCE [LARGE SCALE GENOMIC DNA]</scope>
    <source>
        <strain evidence="4">Tucson 14030-0811.24</strain>
    </source>
</reference>
<proteinExistence type="inferred from homology"/>
<gene>
    <name evidence="1" type="primary">Jupiter</name>
    <name type="ORF">GK11035</name>
</gene>
<comment type="function">
    <text evidence="1">Binds to all microtubule populations.</text>
</comment>
<comment type="subcellular location">
    <subcellularLocation>
        <location evidence="1">Nucleus</location>
    </subcellularLocation>
    <subcellularLocation>
        <location evidence="1">Cytoplasm</location>
    </subcellularLocation>
    <subcellularLocation>
        <location evidence="1">Cytoplasm</location>
        <location evidence="1">Cytoskeleton</location>
    </subcellularLocation>
    <subcellularLocation>
        <location evidence="1">Cytoplasm</location>
        <location evidence="1">Cytoskeleton</location>
        <location evidence="1">Spindle</location>
    </subcellularLocation>
</comment>
<comment type="similarity">
    <text evidence="3">Belongs to the MAP Jupiter family.</text>
</comment>
<protein>
    <recommendedName>
        <fullName evidence="1">Microtubule-associated protein Jupiter</fullName>
    </recommendedName>
</protein>